<accession>Q9HN56</accession>
<evidence type="ECO:0000250" key="1"/>
<evidence type="ECO:0000305" key="2"/>
<sequence>MTDPKETINIENVVASTGIGQELDLQSVAMDLEGADYDPEQFPGLVYRTQDPKSAALIFRSGKIVCTGAKSTDDVHESLRIVFDKLRELSIKVEDDPEIVVQNIVTSADLGRQLNLNAIAIGLGLENIEYEPEQFPGLVYRLDDPEVVALLFGSGKLVITGGKEPKDAEHAVDKITSRLEELGLLD</sequence>
<gene>
    <name type="primary">tbpE</name>
    <name type="ordered locus">VNG_2243G</name>
</gene>
<comment type="function">
    <text evidence="1">General factor that plays a role in the activation of archaeal genes transcribed by RNA polymerase. Binds specifically to the TATA box promoter element which lies close to the position of transcription initiation (By similarity).</text>
</comment>
<comment type="similarity">
    <text evidence="2">Belongs to the TBP family.</text>
</comment>
<dbReference type="EMBL" id="AE004437">
    <property type="protein sequence ID" value="AAG20365.1"/>
    <property type="molecule type" value="Genomic_DNA"/>
</dbReference>
<dbReference type="PIR" id="A84375">
    <property type="entry name" value="A84375"/>
</dbReference>
<dbReference type="RefSeq" id="WP_010903666.1">
    <property type="nucleotide sequence ID" value="NC_002607.1"/>
</dbReference>
<dbReference type="SMR" id="Q9HN56"/>
<dbReference type="FunCoup" id="Q9HN56">
    <property type="interactions" value="128"/>
</dbReference>
<dbReference type="STRING" id="64091.VNG_2243G"/>
<dbReference type="PaxDb" id="64091-VNG_2243G"/>
<dbReference type="KEGG" id="hal:VNG_2243G"/>
<dbReference type="PATRIC" id="fig|64091.14.peg.1725"/>
<dbReference type="HOGENOM" id="CLU_060161_4_3_2"/>
<dbReference type="InParanoid" id="Q9HN56"/>
<dbReference type="OrthoDB" id="350539at2157"/>
<dbReference type="PhylomeDB" id="Q9HN56"/>
<dbReference type="Proteomes" id="UP000000554">
    <property type="component" value="Chromosome"/>
</dbReference>
<dbReference type="GO" id="GO:0003677">
    <property type="term" value="F:DNA binding"/>
    <property type="evidence" value="ECO:0007669"/>
    <property type="project" value="UniProtKB-KW"/>
</dbReference>
<dbReference type="GO" id="GO:0003700">
    <property type="term" value="F:DNA-binding transcription factor activity"/>
    <property type="evidence" value="ECO:0007669"/>
    <property type="project" value="UniProtKB-UniRule"/>
</dbReference>
<dbReference type="GO" id="GO:0140223">
    <property type="term" value="F:general transcription initiation factor activity"/>
    <property type="evidence" value="ECO:0000318"/>
    <property type="project" value="GO_Central"/>
</dbReference>
<dbReference type="GO" id="GO:0006352">
    <property type="term" value="P:DNA-templated transcription initiation"/>
    <property type="evidence" value="ECO:0000318"/>
    <property type="project" value="GO_Central"/>
</dbReference>
<dbReference type="CDD" id="cd04518">
    <property type="entry name" value="TBP_archaea"/>
    <property type="match status" value="1"/>
</dbReference>
<dbReference type="FunFam" id="3.30.310.10:FF:000007">
    <property type="entry name" value="TATA-box-binding protein"/>
    <property type="match status" value="1"/>
</dbReference>
<dbReference type="FunFam" id="3.30.310.10:FF:000010">
    <property type="entry name" value="TATA-box-binding protein"/>
    <property type="match status" value="1"/>
</dbReference>
<dbReference type="Gene3D" id="3.30.310.10">
    <property type="entry name" value="TATA-Binding Protein"/>
    <property type="match status" value="2"/>
</dbReference>
<dbReference type="HAMAP" id="MF_00408">
    <property type="entry name" value="TATA_bind_prot_arch"/>
    <property type="match status" value="1"/>
</dbReference>
<dbReference type="InterPro" id="IPR000814">
    <property type="entry name" value="TBP"/>
</dbReference>
<dbReference type="InterPro" id="IPR033711">
    <property type="entry name" value="TBP_archaea"/>
</dbReference>
<dbReference type="InterPro" id="IPR012295">
    <property type="entry name" value="TBP_dom_sf"/>
</dbReference>
<dbReference type="NCBIfam" id="NF001593">
    <property type="entry name" value="PRK00394.1-2"/>
    <property type="match status" value="1"/>
</dbReference>
<dbReference type="NCBIfam" id="NF001595">
    <property type="entry name" value="PRK00394.1-5"/>
    <property type="match status" value="1"/>
</dbReference>
<dbReference type="NCBIfam" id="NF001597">
    <property type="entry name" value="PRK00394.2-2"/>
    <property type="match status" value="1"/>
</dbReference>
<dbReference type="PANTHER" id="PTHR10126">
    <property type="entry name" value="TATA-BOX BINDING PROTEIN"/>
    <property type="match status" value="1"/>
</dbReference>
<dbReference type="Pfam" id="PF00352">
    <property type="entry name" value="TBP"/>
    <property type="match status" value="2"/>
</dbReference>
<dbReference type="PRINTS" id="PR00686">
    <property type="entry name" value="TIFACTORIID"/>
</dbReference>
<dbReference type="SUPFAM" id="SSF55945">
    <property type="entry name" value="TATA-box binding protein-like"/>
    <property type="match status" value="2"/>
</dbReference>
<dbReference type="PROSITE" id="PS00351">
    <property type="entry name" value="TFIID"/>
    <property type="match status" value="1"/>
</dbReference>
<feature type="chain" id="PRO_0000154003" description="TATA-box-binding protein E">
    <location>
        <begin position="1"/>
        <end position="186"/>
    </location>
</feature>
<feature type="repeat" description="1">
    <location>
        <begin position="10"/>
        <end position="86"/>
    </location>
</feature>
<feature type="repeat" description="2">
    <location>
        <begin position="101"/>
        <end position="179"/>
    </location>
</feature>
<name>TBPE_HALSA</name>
<organism>
    <name type="scientific">Halobacterium salinarum (strain ATCC 700922 / JCM 11081 / NRC-1)</name>
    <name type="common">Halobacterium halobium</name>
    <dbReference type="NCBI Taxonomy" id="64091"/>
    <lineage>
        <taxon>Archaea</taxon>
        <taxon>Methanobacteriati</taxon>
        <taxon>Methanobacteriota</taxon>
        <taxon>Stenosarchaea group</taxon>
        <taxon>Halobacteria</taxon>
        <taxon>Halobacteriales</taxon>
        <taxon>Halobacteriaceae</taxon>
        <taxon>Halobacterium</taxon>
        <taxon>Halobacterium salinarum NRC-34001</taxon>
    </lineage>
</organism>
<keyword id="KW-0238">DNA-binding</keyword>
<keyword id="KW-1185">Reference proteome</keyword>
<keyword id="KW-0677">Repeat</keyword>
<keyword id="KW-0804">Transcription</keyword>
<keyword id="KW-0805">Transcription regulation</keyword>
<proteinExistence type="inferred from homology"/>
<reference key="1">
    <citation type="journal article" date="2000" name="Proc. Natl. Acad. Sci. U.S.A.">
        <title>Genome sequence of Halobacterium species NRC-1.</title>
        <authorList>
            <person name="Ng W.V."/>
            <person name="Kennedy S.P."/>
            <person name="Mahairas G.G."/>
            <person name="Berquist B."/>
            <person name="Pan M."/>
            <person name="Shukla H.D."/>
            <person name="Lasky S.R."/>
            <person name="Baliga N.S."/>
            <person name="Thorsson V."/>
            <person name="Sbrogna J."/>
            <person name="Swartzell S."/>
            <person name="Weir D."/>
            <person name="Hall J."/>
            <person name="Dahl T.A."/>
            <person name="Welti R."/>
            <person name="Goo Y.A."/>
            <person name="Leithauser B."/>
            <person name="Keller K."/>
            <person name="Cruz R."/>
            <person name="Danson M.J."/>
            <person name="Hough D.W."/>
            <person name="Maddocks D.G."/>
            <person name="Jablonski P.E."/>
            <person name="Krebs M.P."/>
            <person name="Angevine C.M."/>
            <person name="Dale H."/>
            <person name="Isenbarger T.A."/>
            <person name="Peck R.F."/>
            <person name="Pohlschroder M."/>
            <person name="Spudich J.L."/>
            <person name="Jung K.-H."/>
            <person name="Alam M."/>
            <person name="Freitas T."/>
            <person name="Hou S."/>
            <person name="Daniels C.J."/>
            <person name="Dennis P.P."/>
            <person name="Omer A.D."/>
            <person name="Ebhardt H."/>
            <person name="Lowe T.M."/>
            <person name="Liang P."/>
            <person name="Riley M."/>
            <person name="Hood L."/>
            <person name="DasSarma S."/>
        </authorList>
    </citation>
    <scope>NUCLEOTIDE SEQUENCE [LARGE SCALE GENOMIC DNA]</scope>
    <source>
        <strain>ATCC 700922 / JCM 11081 / NRC-1</strain>
    </source>
</reference>
<protein>
    <recommendedName>
        <fullName>TATA-box-binding protein E</fullName>
    </recommendedName>
    <alternativeName>
        <fullName>Box A-binding protein E</fullName>
        <shortName>BAP E</shortName>
    </alternativeName>
    <alternativeName>
        <fullName>TATA sequence-binding protein E</fullName>
        <shortName>TBP E</shortName>
    </alternativeName>
    <alternativeName>
        <fullName>TATA-box factor E</fullName>
    </alternativeName>
</protein>